<keyword id="KW-0002">3D-structure</keyword>
<keyword id="KW-0240">DNA-directed RNA polymerase</keyword>
<keyword id="KW-0548">Nucleotidyltransferase</keyword>
<keyword id="KW-0804">Transcription</keyword>
<keyword id="KW-0808">Transferase</keyword>
<evidence type="ECO:0000255" key="1">
    <source>
        <dbReference type="HAMAP-Rule" id="MF_00059"/>
    </source>
</evidence>
<evidence type="ECO:0007829" key="2">
    <source>
        <dbReference type="PDB" id="2JZB"/>
    </source>
</evidence>
<proteinExistence type="evidence at protein level"/>
<accession>Q664U6</accession>
<organism>
    <name type="scientific">Yersinia pseudotuberculosis serotype I (strain IP32953)</name>
    <dbReference type="NCBI Taxonomy" id="273123"/>
    <lineage>
        <taxon>Bacteria</taxon>
        <taxon>Pseudomonadati</taxon>
        <taxon>Pseudomonadota</taxon>
        <taxon>Gammaproteobacteria</taxon>
        <taxon>Enterobacterales</taxon>
        <taxon>Yersiniaceae</taxon>
        <taxon>Yersinia</taxon>
    </lineage>
</organism>
<feature type="chain" id="PRO_0000175428" description="DNA-directed RNA polymerase subunit alpha">
    <location>
        <begin position="1"/>
        <end position="329"/>
    </location>
</feature>
<feature type="region of interest" description="Alpha N-terminal domain (alpha-NTD)" evidence="1">
    <location>
        <begin position="1"/>
        <end position="235"/>
    </location>
</feature>
<feature type="region of interest" description="Alpha C-terminal domain (alpha-CTD)" evidence="1">
    <location>
        <begin position="249"/>
        <end position="329"/>
    </location>
</feature>
<feature type="helix" evidence="2">
    <location>
        <begin position="251"/>
        <end position="254"/>
    </location>
</feature>
<feature type="helix" evidence="2">
    <location>
        <begin position="257"/>
        <end position="259"/>
    </location>
</feature>
<feature type="strand" evidence="2">
    <location>
        <begin position="260"/>
        <end position="262"/>
    </location>
</feature>
<feature type="helix" evidence="2">
    <location>
        <begin position="264"/>
        <end position="271"/>
    </location>
</feature>
<feature type="turn" evidence="2">
    <location>
        <begin position="272"/>
        <end position="274"/>
    </location>
</feature>
<feature type="helix" evidence="2">
    <location>
        <begin position="278"/>
        <end position="283"/>
    </location>
</feature>
<feature type="helix" evidence="2">
    <location>
        <begin position="286"/>
        <end position="290"/>
    </location>
</feature>
<feature type="helix" evidence="2">
    <location>
        <begin position="297"/>
        <end position="308"/>
    </location>
</feature>
<feature type="strand" evidence="2">
    <location>
        <begin position="319"/>
        <end position="321"/>
    </location>
</feature>
<feature type="turn" evidence="2">
    <location>
        <begin position="324"/>
        <end position="326"/>
    </location>
</feature>
<gene>
    <name evidence="1" type="primary">rpoA</name>
    <name type="ordered locus">YPTB3673</name>
</gene>
<protein>
    <recommendedName>
        <fullName evidence="1">DNA-directed RNA polymerase subunit alpha</fullName>
        <shortName evidence="1">RNAP subunit alpha</shortName>
        <ecNumber evidence="1">2.7.7.6</ecNumber>
    </recommendedName>
    <alternativeName>
        <fullName evidence="1">RNA polymerase subunit alpha</fullName>
    </alternativeName>
    <alternativeName>
        <fullName evidence="1">Transcriptase subunit alpha</fullName>
    </alternativeName>
</protein>
<reference key="1">
    <citation type="journal article" date="2004" name="Proc. Natl. Acad. Sci. U.S.A.">
        <title>Insights into the evolution of Yersinia pestis through whole-genome comparison with Yersinia pseudotuberculosis.</title>
        <authorList>
            <person name="Chain P.S.G."/>
            <person name="Carniel E."/>
            <person name="Larimer F.W."/>
            <person name="Lamerdin J."/>
            <person name="Stoutland P.O."/>
            <person name="Regala W.M."/>
            <person name="Georgescu A.M."/>
            <person name="Vergez L.M."/>
            <person name="Land M.L."/>
            <person name="Motin V.L."/>
            <person name="Brubaker R.R."/>
            <person name="Fowler J."/>
            <person name="Hinnebusch J."/>
            <person name="Marceau M."/>
            <person name="Medigue C."/>
            <person name="Simonet M."/>
            <person name="Chenal-Francisque V."/>
            <person name="Souza B."/>
            <person name="Dacheux D."/>
            <person name="Elliott J.M."/>
            <person name="Derbise A."/>
            <person name="Hauser L.J."/>
            <person name="Garcia E."/>
        </authorList>
    </citation>
    <scope>NUCLEOTIDE SEQUENCE [LARGE SCALE GENOMIC DNA]</scope>
    <source>
        <strain>IP32953</strain>
    </source>
</reference>
<name>RPOA_YERPS</name>
<sequence length="329" mass="36509">MQGSVTEFLKPRLVDIEQVSSTHAKVTLEPLERGFGHTLGNALRRILLSSMPGCAVTEVEIDGVLHEYSTKEGVQEDILEILLNLKGLAVRVQGKDEVILTLNKSGIGPVTAADITHDGDVEIVKPQHVICHLTDENASINMRIKVQRGRGYVPASARIHSEEDERPIGRLLVDACYSPVERIAYNVEAARVEQRTDLDKLVIEMETNGTIDPEEAIRRAATILAEQLEAFVDLRDVRQPEVKEEKPEFDPILLRPVDDLELTVRSANCLKAEAIHYIGDLVQRTEVELLKTPNLGKKSLTEIKDVLASRGLSLGMRLENWPPASIADE</sequence>
<dbReference type="EC" id="2.7.7.6" evidence="1"/>
<dbReference type="EMBL" id="BX936398">
    <property type="protein sequence ID" value="CAH22911.1"/>
    <property type="molecule type" value="Genomic_DNA"/>
</dbReference>
<dbReference type="RefSeq" id="WP_002209013.1">
    <property type="nucleotide sequence ID" value="NZ_CP009712.1"/>
</dbReference>
<dbReference type="PDB" id="2JZB">
    <property type="method" value="NMR"/>
    <property type="chains" value="A=233-329"/>
</dbReference>
<dbReference type="PDBsum" id="2JZB"/>
<dbReference type="SMR" id="Q664U6"/>
<dbReference type="KEGG" id="ypo:BZ17_2914"/>
<dbReference type="KEGG" id="yps:YPTB3673"/>
<dbReference type="PATRIC" id="fig|273123.14.peg.3055"/>
<dbReference type="EvolutionaryTrace" id="Q664U6"/>
<dbReference type="Proteomes" id="UP000001011">
    <property type="component" value="Chromosome"/>
</dbReference>
<dbReference type="GO" id="GO:0005737">
    <property type="term" value="C:cytoplasm"/>
    <property type="evidence" value="ECO:0007669"/>
    <property type="project" value="UniProtKB-ARBA"/>
</dbReference>
<dbReference type="GO" id="GO:0000428">
    <property type="term" value="C:DNA-directed RNA polymerase complex"/>
    <property type="evidence" value="ECO:0007669"/>
    <property type="project" value="UniProtKB-KW"/>
</dbReference>
<dbReference type="GO" id="GO:0003677">
    <property type="term" value="F:DNA binding"/>
    <property type="evidence" value="ECO:0007669"/>
    <property type="project" value="UniProtKB-UniRule"/>
</dbReference>
<dbReference type="GO" id="GO:0003899">
    <property type="term" value="F:DNA-directed RNA polymerase activity"/>
    <property type="evidence" value="ECO:0007669"/>
    <property type="project" value="UniProtKB-UniRule"/>
</dbReference>
<dbReference type="GO" id="GO:0046983">
    <property type="term" value="F:protein dimerization activity"/>
    <property type="evidence" value="ECO:0007669"/>
    <property type="project" value="InterPro"/>
</dbReference>
<dbReference type="GO" id="GO:0006351">
    <property type="term" value="P:DNA-templated transcription"/>
    <property type="evidence" value="ECO:0007669"/>
    <property type="project" value="UniProtKB-UniRule"/>
</dbReference>
<dbReference type="CDD" id="cd06928">
    <property type="entry name" value="RNAP_alpha_NTD"/>
    <property type="match status" value="1"/>
</dbReference>
<dbReference type="FunFam" id="1.10.150.20:FF:000001">
    <property type="entry name" value="DNA-directed RNA polymerase subunit alpha"/>
    <property type="match status" value="1"/>
</dbReference>
<dbReference type="FunFam" id="2.170.120.12:FF:000001">
    <property type="entry name" value="DNA-directed RNA polymerase subunit alpha"/>
    <property type="match status" value="1"/>
</dbReference>
<dbReference type="Gene3D" id="1.10.150.20">
    <property type="entry name" value="5' to 3' exonuclease, C-terminal subdomain"/>
    <property type="match status" value="1"/>
</dbReference>
<dbReference type="Gene3D" id="2.170.120.12">
    <property type="entry name" value="DNA-directed RNA polymerase, insert domain"/>
    <property type="match status" value="1"/>
</dbReference>
<dbReference type="Gene3D" id="3.30.1360.10">
    <property type="entry name" value="RNA polymerase, RBP11-like subunit"/>
    <property type="match status" value="1"/>
</dbReference>
<dbReference type="HAMAP" id="MF_00059">
    <property type="entry name" value="RNApol_bact_RpoA"/>
    <property type="match status" value="1"/>
</dbReference>
<dbReference type="InterPro" id="IPR011262">
    <property type="entry name" value="DNA-dir_RNA_pol_insert"/>
</dbReference>
<dbReference type="InterPro" id="IPR011263">
    <property type="entry name" value="DNA-dir_RNA_pol_RpoA/D/Rpb3"/>
</dbReference>
<dbReference type="InterPro" id="IPR011773">
    <property type="entry name" value="DNA-dir_RpoA"/>
</dbReference>
<dbReference type="InterPro" id="IPR036603">
    <property type="entry name" value="RBP11-like"/>
</dbReference>
<dbReference type="InterPro" id="IPR011260">
    <property type="entry name" value="RNAP_asu_C"/>
</dbReference>
<dbReference type="InterPro" id="IPR036643">
    <property type="entry name" value="RNApol_insert_sf"/>
</dbReference>
<dbReference type="NCBIfam" id="NF003513">
    <property type="entry name" value="PRK05182.1-2"/>
    <property type="match status" value="1"/>
</dbReference>
<dbReference type="NCBIfam" id="NF003519">
    <property type="entry name" value="PRK05182.2-5"/>
    <property type="match status" value="1"/>
</dbReference>
<dbReference type="NCBIfam" id="TIGR02027">
    <property type="entry name" value="rpoA"/>
    <property type="match status" value="1"/>
</dbReference>
<dbReference type="Pfam" id="PF01000">
    <property type="entry name" value="RNA_pol_A_bac"/>
    <property type="match status" value="1"/>
</dbReference>
<dbReference type="Pfam" id="PF03118">
    <property type="entry name" value="RNA_pol_A_CTD"/>
    <property type="match status" value="1"/>
</dbReference>
<dbReference type="Pfam" id="PF01193">
    <property type="entry name" value="RNA_pol_L"/>
    <property type="match status" value="1"/>
</dbReference>
<dbReference type="SMART" id="SM00662">
    <property type="entry name" value="RPOLD"/>
    <property type="match status" value="1"/>
</dbReference>
<dbReference type="SUPFAM" id="SSF47789">
    <property type="entry name" value="C-terminal domain of RNA polymerase alpha subunit"/>
    <property type="match status" value="1"/>
</dbReference>
<dbReference type="SUPFAM" id="SSF56553">
    <property type="entry name" value="Insert subdomain of RNA polymerase alpha subunit"/>
    <property type="match status" value="1"/>
</dbReference>
<dbReference type="SUPFAM" id="SSF55257">
    <property type="entry name" value="RBP11-like subunits of RNA polymerase"/>
    <property type="match status" value="1"/>
</dbReference>
<comment type="function">
    <text>DNA-dependent RNA polymerase catalyzes the transcription of DNA into RNA using the four ribonucleoside triphosphates as substrates.</text>
</comment>
<comment type="catalytic activity">
    <reaction evidence="1">
        <text>RNA(n) + a ribonucleoside 5'-triphosphate = RNA(n+1) + diphosphate</text>
        <dbReference type="Rhea" id="RHEA:21248"/>
        <dbReference type="Rhea" id="RHEA-COMP:14527"/>
        <dbReference type="Rhea" id="RHEA-COMP:17342"/>
        <dbReference type="ChEBI" id="CHEBI:33019"/>
        <dbReference type="ChEBI" id="CHEBI:61557"/>
        <dbReference type="ChEBI" id="CHEBI:140395"/>
        <dbReference type="EC" id="2.7.7.6"/>
    </reaction>
</comment>
<comment type="subunit">
    <text evidence="1">Homodimer. The RNAP catalytic core consists of 2 alpha, 1 beta, 1 beta' and 1 omega subunit. When a sigma factor is associated with the core the holoenzyme is formed, which can initiate transcription.</text>
</comment>
<comment type="domain">
    <text evidence="1">The N-terminal domain is essential for RNAP assembly and basal transcription, whereas the C-terminal domain is involved in interaction with transcriptional regulators and with upstream promoter elements.</text>
</comment>
<comment type="similarity">
    <text evidence="1">Belongs to the RNA polymerase alpha chain family.</text>
</comment>